<feature type="chain" id="PRO_1000052885" description="Large ribosomal subunit protein bL25">
    <location>
        <begin position="1"/>
        <end position="192"/>
    </location>
</feature>
<keyword id="KW-1185">Reference proteome</keyword>
<keyword id="KW-0687">Ribonucleoprotein</keyword>
<keyword id="KW-0689">Ribosomal protein</keyword>
<keyword id="KW-0694">RNA-binding</keyword>
<keyword id="KW-0699">rRNA-binding</keyword>
<sequence length="192" mass="21277">MKQVEIIGYSRANLGKKGSKDLRLDSNVPCVLYGGESQLHFHVPMFLFRDIIYTGVACTVLLNLEGKQYKCVVQEVQFHPINEMLLHVDFLLLDDKKQVKMNIPVKFEGTSPGVIKGGKLVQKVATLQVKAFPKDLPDVILADISQLELAKSVKVGDIKTNNYTILNAKSIPVCTVTIPRSLKQEEAAAAKK</sequence>
<comment type="function">
    <text evidence="1">This is one of the proteins that binds to the 5S RNA in the ribosome where it forms part of the central protuberance.</text>
</comment>
<comment type="subunit">
    <text evidence="1">Part of the 50S ribosomal subunit; part of the 5S rRNA/L5/L18/L25 subcomplex. Contacts the 5S rRNA. Binds to the 5S rRNA independently of L5 and L18.</text>
</comment>
<comment type="similarity">
    <text evidence="1">Belongs to the bacterial ribosomal protein bL25 family. CTC subfamily.</text>
</comment>
<dbReference type="EMBL" id="CP000383">
    <property type="protein sequence ID" value="ABG59878.1"/>
    <property type="molecule type" value="Genomic_DNA"/>
</dbReference>
<dbReference type="RefSeq" id="WP_011585988.1">
    <property type="nucleotide sequence ID" value="NC_008255.1"/>
</dbReference>
<dbReference type="SMR" id="Q11RT6"/>
<dbReference type="STRING" id="269798.CHU_2626"/>
<dbReference type="KEGG" id="chu:CHU_2626"/>
<dbReference type="eggNOG" id="COG1825">
    <property type="taxonomic scope" value="Bacteria"/>
</dbReference>
<dbReference type="HOGENOM" id="CLU_075939_2_1_10"/>
<dbReference type="OrthoDB" id="9786489at2"/>
<dbReference type="Proteomes" id="UP000001822">
    <property type="component" value="Chromosome"/>
</dbReference>
<dbReference type="GO" id="GO:0022625">
    <property type="term" value="C:cytosolic large ribosomal subunit"/>
    <property type="evidence" value="ECO:0007669"/>
    <property type="project" value="TreeGrafter"/>
</dbReference>
<dbReference type="GO" id="GO:0008097">
    <property type="term" value="F:5S rRNA binding"/>
    <property type="evidence" value="ECO:0007669"/>
    <property type="project" value="InterPro"/>
</dbReference>
<dbReference type="GO" id="GO:0003735">
    <property type="term" value="F:structural constituent of ribosome"/>
    <property type="evidence" value="ECO:0007669"/>
    <property type="project" value="InterPro"/>
</dbReference>
<dbReference type="GO" id="GO:0006412">
    <property type="term" value="P:translation"/>
    <property type="evidence" value="ECO:0007669"/>
    <property type="project" value="UniProtKB-UniRule"/>
</dbReference>
<dbReference type="CDD" id="cd00495">
    <property type="entry name" value="Ribosomal_L25_TL5_CTC"/>
    <property type="match status" value="1"/>
</dbReference>
<dbReference type="Gene3D" id="2.170.120.20">
    <property type="entry name" value="Ribosomal protein L25, beta domain"/>
    <property type="match status" value="1"/>
</dbReference>
<dbReference type="Gene3D" id="2.40.240.10">
    <property type="entry name" value="Ribosomal Protein L25, Chain P"/>
    <property type="match status" value="1"/>
</dbReference>
<dbReference type="HAMAP" id="MF_01334">
    <property type="entry name" value="Ribosomal_bL25_CTC"/>
    <property type="match status" value="1"/>
</dbReference>
<dbReference type="InterPro" id="IPR020056">
    <property type="entry name" value="Rbsml_bL25/Gln-tRNA_synth_N"/>
</dbReference>
<dbReference type="InterPro" id="IPR011035">
    <property type="entry name" value="Ribosomal_bL25/Gln-tRNA_synth"/>
</dbReference>
<dbReference type="InterPro" id="IPR020057">
    <property type="entry name" value="Ribosomal_bL25_b-dom"/>
</dbReference>
<dbReference type="InterPro" id="IPR037121">
    <property type="entry name" value="Ribosomal_bL25_C"/>
</dbReference>
<dbReference type="InterPro" id="IPR001021">
    <property type="entry name" value="Ribosomal_bL25_long"/>
</dbReference>
<dbReference type="InterPro" id="IPR029751">
    <property type="entry name" value="Ribosomal_L25_dom"/>
</dbReference>
<dbReference type="InterPro" id="IPR020930">
    <property type="entry name" value="Ribosomal_uL5_bac-type"/>
</dbReference>
<dbReference type="NCBIfam" id="TIGR00731">
    <property type="entry name" value="bL25_bact_ctc"/>
    <property type="match status" value="1"/>
</dbReference>
<dbReference type="NCBIfam" id="NF004132">
    <property type="entry name" value="PRK05618.2-2"/>
    <property type="match status" value="1"/>
</dbReference>
<dbReference type="PANTHER" id="PTHR33284">
    <property type="entry name" value="RIBOSOMAL PROTEIN L25/GLN-TRNA SYNTHETASE, ANTI-CODON-BINDING DOMAIN-CONTAINING PROTEIN"/>
    <property type="match status" value="1"/>
</dbReference>
<dbReference type="PANTHER" id="PTHR33284:SF1">
    <property type="entry name" value="RIBOSOMAL PROTEIN L25_GLN-TRNA SYNTHETASE, ANTI-CODON-BINDING DOMAIN-CONTAINING PROTEIN"/>
    <property type="match status" value="1"/>
</dbReference>
<dbReference type="Pfam" id="PF01386">
    <property type="entry name" value="Ribosomal_L25p"/>
    <property type="match status" value="1"/>
</dbReference>
<dbReference type="Pfam" id="PF14693">
    <property type="entry name" value="Ribosomal_TL5_C"/>
    <property type="match status" value="1"/>
</dbReference>
<dbReference type="SUPFAM" id="SSF50715">
    <property type="entry name" value="Ribosomal protein L25-like"/>
    <property type="match status" value="1"/>
</dbReference>
<gene>
    <name evidence="1" type="primary">rplY</name>
    <name evidence="1" type="synonym">ctc</name>
    <name type="ordered locus">CHU_2626</name>
</gene>
<organism>
    <name type="scientific">Cytophaga hutchinsonii (strain ATCC 33406 / DSM 1761 / CIP 103989 / NBRC 15051 / NCIMB 9469 / D465)</name>
    <dbReference type="NCBI Taxonomy" id="269798"/>
    <lineage>
        <taxon>Bacteria</taxon>
        <taxon>Pseudomonadati</taxon>
        <taxon>Bacteroidota</taxon>
        <taxon>Cytophagia</taxon>
        <taxon>Cytophagales</taxon>
        <taxon>Cytophagaceae</taxon>
        <taxon>Cytophaga</taxon>
    </lineage>
</organism>
<proteinExistence type="inferred from homology"/>
<name>RL25_CYTH3</name>
<evidence type="ECO:0000255" key="1">
    <source>
        <dbReference type="HAMAP-Rule" id="MF_01334"/>
    </source>
</evidence>
<evidence type="ECO:0000305" key="2"/>
<protein>
    <recommendedName>
        <fullName evidence="1">Large ribosomal subunit protein bL25</fullName>
    </recommendedName>
    <alternativeName>
        <fullName evidence="2">50S ribosomal protein L25</fullName>
    </alternativeName>
    <alternativeName>
        <fullName evidence="1">General stress protein CTC</fullName>
    </alternativeName>
</protein>
<reference key="1">
    <citation type="journal article" date="2007" name="Appl. Environ. Microbiol.">
        <title>Genome sequence of the cellulolytic gliding bacterium Cytophaga hutchinsonii.</title>
        <authorList>
            <person name="Xie G."/>
            <person name="Bruce D.C."/>
            <person name="Challacombe J.F."/>
            <person name="Chertkov O."/>
            <person name="Detter J.C."/>
            <person name="Gilna P."/>
            <person name="Han C.S."/>
            <person name="Lucas S."/>
            <person name="Misra M."/>
            <person name="Myers G.L."/>
            <person name="Richardson P."/>
            <person name="Tapia R."/>
            <person name="Thayer N."/>
            <person name="Thompson L.S."/>
            <person name="Brettin T.S."/>
            <person name="Henrissat B."/>
            <person name="Wilson D.B."/>
            <person name="McBride M.J."/>
        </authorList>
    </citation>
    <scope>NUCLEOTIDE SEQUENCE [LARGE SCALE GENOMIC DNA]</scope>
    <source>
        <strain>ATCC 33406 / DSM 1761 / JCM 20678 / CIP 103989 / IAM 12607 / NBRC 15051 / NCIMB 9469 / D465</strain>
    </source>
</reference>
<accession>Q11RT6</accession>